<evidence type="ECO:0000250" key="1"/>
<evidence type="ECO:0000255" key="2">
    <source>
        <dbReference type="HAMAP-Rule" id="MF_00403"/>
    </source>
</evidence>
<evidence type="ECO:0000305" key="3"/>
<accession>A9W4P6</accession>
<name>RS12_METEP</name>
<keyword id="KW-0488">Methylation</keyword>
<keyword id="KW-0687">Ribonucleoprotein</keyword>
<keyword id="KW-0689">Ribosomal protein</keyword>
<keyword id="KW-0694">RNA-binding</keyword>
<keyword id="KW-0699">rRNA-binding</keyword>
<keyword id="KW-0820">tRNA-binding</keyword>
<feature type="chain" id="PRO_1000194190" description="Small ribosomal subunit protein uS12">
    <location>
        <begin position="1"/>
        <end position="123"/>
    </location>
</feature>
<feature type="modified residue" description="3-methylthioaspartic acid" evidence="1">
    <location>
        <position position="89"/>
    </location>
</feature>
<dbReference type="EMBL" id="CP000908">
    <property type="protein sequence ID" value="ABY30552.1"/>
    <property type="molecule type" value="Genomic_DNA"/>
</dbReference>
<dbReference type="RefSeq" id="WP_004447775.1">
    <property type="nucleotide sequence ID" value="NC_010172.1"/>
</dbReference>
<dbReference type="SMR" id="A9W4P6"/>
<dbReference type="GeneID" id="72989845"/>
<dbReference type="KEGG" id="mex:Mext_2157"/>
<dbReference type="eggNOG" id="COG0048">
    <property type="taxonomic scope" value="Bacteria"/>
</dbReference>
<dbReference type="HOGENOM" id="CLU_104295_1_2_5"/>
<dbReference type="BioCyc" id="MEXT419610:MEXT_RS10890-MONOMER"/>
<dbReference type="GO" id="GO:0015935">
    <property type="term" value="C:small ribosomal subunit"/>
    <property type="evidence" value="ECO:0007669"/>
    <property type="project" value="InterPro"/>
</dbReference>
<dbReference type="GO" id="GO:0019843">
    <property type="term" value="F:rRNA binding"/>
    <property type="evidence" value="ECO:0007669"/>
    <property type="project" value="UniProtKB-UniRule"/>
</dbReference>
<dbReference type="GO" id="GO:0003735">
    <property type="term" value="F:structural constituent of ribosome"/>
    <property type="evidence" value="ECO:0007669"/>
    <property type="project" value="InterPro"/>
</dbReference>
<dbReference type="GO" id="GO:0000049">
    <property type="term" value="F:tRNA binding"/>
    <property type="evidence" value="ECO:0007669"/>
    <property type="project" value="UniProtKB-UniRule"/>
</dbReference>
<dbReference type="GO" id="GO:0006412">
    <property type="term" value="P:translation"/>
    <property type="evidence" value="ECO:0007669"/>
    <property type="project" value="UniProtKB-UniRule"/>
</dbReference>
<dbReference type="CDD" id="cd03368">
    <property type="entry name" value="Ribosomal_S12"/>
    <property type="match status" value="1"/>
</dbReference>
<dbReference type="FunFam" id="2.40.50.140:FF:000001">
    <property type="entry name" value="30S ribosomal protein S12"/>
    <property type="match status" value="1"/>
</dbReference>
<dbReference type="Gene3D" id="2.40.50.140">
    <property type="entry name" value="Nucleic acid-binding proteins"/>
    <property type="match status" value="1"/>
</dbReference>
<dbReference type="HAMAP" id="MF_00403_B">
    <property type="entry name" value="Ribosomal_uS12_B"/>
    <property type="match status" value="1"/>
</dbReference>
<dbReference type="InterPro" id="IPR012340">
    <property type="entry name" value="NA-bd_OB-fold"/>
</dbReference>
<dbReference type="InterPro" id="IPR006032">
    <property type="entry name" value="Ribosomal_uS12"/>
</dbReference>
<dbReference type="InterPro" id="IPR005679">
    <property type="entry name" value="Ribosomal_uS12_bac"/>
</dbReference>
<dbReference type="NCBIfam" id="TIGR00981">
    <property type="entry name" value="rpsL_bact"/>
    <property type="match status" value="1"/>
</dbReference>
<dbReference type="PANTHER" id="PTHR11652">
    <property type="entry name" value="30S RIBOSOMAL PROTEIN S12 FAMILY MEMBER"/>
    <property type="match status" value="1"/>
</dbReference>
<dbReference type="Pfam" id="PF00164">
    <property type="entry name" value="Ribosom_S12_S23"/>
    <property type="match status" value="1"/>
</dbReference>
<dbReference type="PIRSF" id="PIRSF002133">
    <property type="entry name" value="Ribosomal_S12/S23"/>
    <property type="match status" value="1"/>
</dbReference>
<dbReference type="PRINTS" id="PR01034">
    <property type="entry name" value="RIBOSOMALS12"/>
</dbReference>
<dbReference type="SUPFAM" id="SSF50249">
    <property type="entry name" value="Nucleic acid-binding proteins"/>
    <property type="match status" value="1"/>
</dbReference>
<dbReference type="PROSITE" id="PS00055">
    <property type="entry name" value="RIBOSOMAL_S12"/>
    <property type="match status" value="1"/>
</dbReference>
<gene>
    <name evidence="2" type="primary">rpsL</name>
    <name type="ordered locus">Mext_2157</name>
</gene>
<sequence length="123" mass="13805">MPTINQLIAQPRKAQKARNKVPALNACPQKRGVCTRVYTTTPKKPNSALRKVAKVRLTNGFEVIGYIPGEGHNLQEHSVVMIRGGRVKDLPGVRYHILRGVLDTQGVKNRKQRRSKYGAKRPK</sequence>
<organism>
    <name type="scientific">Methylorubrum extorquens (strain PA1)</name>
    <name type="common">Methylobacterium extorquens</name>
    <dbReference type="NCBI Taxonomy" id="419610"/>
    <lineage>
        <taxon>Bacteria</taxon>
        <taxon>Pseudomonadati</taxon>
        <taxon>Pseudomonadota</taxon>
        <taxon>Alphaproteobacteria</taxon>
        <taxon>Hyphomicrobiales</taxon>
        <taxon>Methylobacteriaceae</taxon>
        <taxon>Methylorubrum</taxon>
    </lineage>
</organism>
<proteinExistence type="inferred from homology"/>
<reference key="1">
    <citation type="submission" date="2007-12" db="EMBL/GenBank/DDBJ databases">
        <title>Complete sequence of Methylobacterium extorquens PA1.</title>
        <authorList>
            <consortium name="US DOE Joint Genome Institute"/>
            <person name="Copeland A."/>
            <person name="Lucas S."/>
            <person name="Lapidus A."/>
            <person name="Barry K."/>
            <person name="Glavina del Rio T."/>
            <person name="Dalin E."/>
            <person name="Tice H."/>
            <person name="Pitluck S."/>
            <person name="Saunders E."/>
            <person name="Brettin T."/>
            <person name="Bruce D."/>
            <person name="Detter J.C."/>
            <person name="Han C."/>
            <person name="Schmutz J."/>
            <person name="Larimer F."/>
            <person name="Land M."/>
            <person name="Hauser L."/>
            <person name="Kyrpides N."/>
            <person name="Kim E."/>
            <person name="Marx C."/>
            <person name="Richardson P."/>
        </authorList>
    </citation>
    <scope>NUCLEOTIDE SEQUENCE [LARGE SCALE GENOMIC DNA]</scope>
    <source>
        <strain>PA1</strain>
    </source>
</reference>
<comment type="function">
    <text evidence="2">With S4 and S5 plays an important role in translational accuracy.</text>
</comment>
<comment type="function">
    <text evidence="2">Interacts with and stabilizes bases of the 16S rRNA that are involved in tRNA selection in the A site and with the mRNA backbone. Located at the interface of the 30S and 50S subunits, it traverses the body of the 30S subunit contacting proteins on the other side and probably holding the rRNA structure together. The combined cluster of proteins S8, S12 and S17 appears to hold together the shoulder and platform of the 30S subunit.</text>
</comment>
<comment type="subunit">
    <text evidence="2">Part of the 30S ribosomal subunit. Contacts proteins S8 and S17. May interact with IF1 in the 30S initiation complex.</text>
</comment>
<comment type="similarity">
    <text evidence="2">Belongs to the universal ribosomal protein uS12 family.</text>
</comment>
<protein>
    <recommendedName>
        <fullName evidence="2">Small ribosomal subunit protein uS12</fullName>
    </recommendedName>
    <alternativeName>
        <fullName evidence="3">30S ribosomal protein S12</fullName>
    </alternativeName>
</protein>